<gene>
    <name evidence="1" type="primary">ruvB</name>
    <name type="ordered locus">PSPTO_3977</name>
</gene>
<evidence type="ECO:0000255" key="1">
    <source>
        <dbReference type="HAMAP-Rule" id="MF_00016"/>
    </source>
</evidence>
<evidence type="ECO:0000305" key="2"/>
<keyword id="KW-0067">ATP-binding</keyword>
<keyword id="KW-0963">Cytoplasm</keyword>
<keyword id="KW-0227">DNA damage</keyword>
<keyword id="KW-0233">DNA recombination</keyword>
<keyword id="KW-0234">DNA repair</keyword>
<keyword id="KW-0238">DNA-binding</keyword>
<keyword id="KW-0378">Hydrolase</keyword>
<keyword id="KW-0547">Nucleotide-binding</keyword>
<keyword id="KW-1185">Reference proteome</keyword>
<name>RUVB_PSESM</name>
<sequence>MIDADRLITAVGGRDRDEQLDRAIRPLSLADYIGQPTVREQMELFIQAARGRSEALDHTLIFGPPGLGKTTLANIIAQEMGVSIKSTSGPVLERPGDLAAILTNLEPNDVLFIDEIHRLSPIVEEVLYPAMEDFQLDIMIGEGPAARSIKLDLPPFTLVGATTRAGMLTNPLRDRFGIVQRLEFYNIADLSTIVARSAGILGLVIEPAGAFEIARRARGTPRIANRLLRRVRDFAQVRGNGQITRQTADKALNLLDVDEHGFDHQDRRLLLTMIEKFDGGPVGVDSLAAAISEERHTIEDVLEPYLIQQGYIMRTPRGRVVTRHAYLHFGLNIPTRMGEMPVAGEFVDDAADL</sequence>
<dbReference type="EC" id="3.6.4.-" evidence="1"/>
<dbReference type="EMBL" id="AE016853">
    <property type="protein sequence ID" value="AAO57436.1"/>
    <property type="status" value="ALT_INIT"/>
    <property type="molecule type" value="Genomic_DNA"/>
</dbReference>
<dbReference type="RefSeq" id="NP_793741.1">
    <property type="nucleotide sequence ID" value="NC_004578.1"/>
</dbReference>
<dbReference type="RefSeq" id="WP_010209286.1">
    <property type="nucleotide sequence ID" value="NC_004578.1"/>
</dbReference>
<dbReference type="SMR" id="Q87Y35"/>
<dbReference type="STRING" id="223283.PSPTO_3977"/>
<dbReference type="GeneID" id="1185653"/>
<dbReference type="KEGG" id="pst:PSPTO_3977"/>
<dbReference type="PATRIC" id="fig|223283.9.peg.4077"/>
<dbReference type="eggNOG" id="COG2255">
    <property type="taxonomic scope" value="Bacteria"/>
</dbReference>
<dbReference type="HOGENOM" id="CLU_055599_1_0_6"/>
<dbReference type="OrthoDB" id="9804478at2"/>
<dbReference type="Proteomes" id="UP000002515">
    <property type="component" value="Chromosome"/>
</dbReference>
<dbReference type="GO" id="GO:0005737">
    <property type="term" value="C:cytoplasm"/>
    <property type="evidence" value="ECO:0007669"/>
    <property type="project" value="UniProtKB-SubCell"/>
</dbReference>
<dbReference type="GO" id="GO:0048476">
    <property type="term" value="C:Holliday junction resolvase complex"/>
    <property type="evidence" value="ECO:0007669"/>
    <property type="project" value="UniProtKB-UniRule"/>
</dbReference>
<dbReference type="GO" id="GO:0005524">
    <property type="term" value="F:ATP binding"/>
    <property type="evidence" value="ECO:0007669"/>
    <property type="project" value="UniProtKB-UniRule"/>
</dbReference>
<dbReference type="GO" id="GO:0016887">
    <property type="term" value="F:ATP hydrolysis activity"/>
    <property type="evidence" value="ECO:0007669"/>
    <property type="project" value="InterPro"/>
</dbReference>
<dbReference type="GO" id="GO:0000400">
    <property type="term" value="F:four-way junction DNA binding"/>
    <property type="evidence" value="ECO:0007669"/>
    <property type="project" value="UniProtKB-UniRule"/>
</dbReference>
<dbReference type="GO" id="GO:0009378">
    <property type="term" value="F:four-way junction helicase activity"/>
    <property type="evidence" value="ECO:0007669"/>
    <property type="project" value="InterPro"/>
</dbReference>
<dbReference type="GO" id="GO:0006310">
    <property type="term" value="P:DNA recombination"/>
    <property type="evidence" value="ECO:0007669"/>
    <property type="project" value="UniProtKB-UniRule"/>
</dbReference>
<dbReference type="GO" id="GO:0006281">
    <property type="term" value="P:DNA repair"/>
    <property type="evidence" value="ECO:0007669"/>
    <property type="project" value="UniProtKB-UniRule"/>
</dbReference>
<dbReference type="CDD" id="cd00009">
    <property type="entry name" value="AAA"/>
    <property type="match status" value="1"/>
</dbReference>
<dbReference type="FunFam" id="1.10.10.10:FF:000086">
    <property type="entry name" value="Holliday junction ATP-dependent DNA helicase RuvB"/>
    <property type="match status" value="1"/>
</dbReference>
<dbReference type="FunFam" id="1.10.8.60:FF:000023">
    <property type="entry name" value="Holliday junction ATP-dependent DNA helicase RuvB"/>
    <property type="match status" value="1"/>
</dbReference>
<dbReference type="FunFam" id="3.40.50.300:FF:000073">
    <property type="entry name" value="Holliday junction ATP-dependent DNA helicase RuvB"/>
    <property type="match status" value="1"/>
</dbReference>
<dbReference type="Gene3D" id="1.10.8.60">
    <property type="match status" value="1"/>
</dbReference>
<dbReference type="Gene3D" id="3.40.50.300">
    <property type="entry name" value="P-loop containing nucleotide triphosphate hydrolases"/>
    <property type="match status" value="1"/>
</dbReference>
<dbReference type="Gene3D" id="1.10.10.10">
    <property type="entry name" value="Winged helix-like DNA-binding domain superfamily/Winged helix DNA-binding domain"/>
    <property type="match status" value="1"/>
</dbReference>
<dbReference type="HAMAP" id="MF_00016">
    <property type="entry name" value="DNA_HJ_migration_RuvB"/>
    <property type="match status" value="1"/>
</dbReference>
<dbReference type="InterPro" id="IPR003593">
    <property type="entry name" value="AAA+_ATPase"/>
</dbReference>
<dbReference type="InterPro" id="IPR041445">
    <property type="entry name" value="AAA_lid_4"/>
</dbReference>
<dbReference type="InterPro" id="IPR004605">
    <property type="entry name" value="DNA_helicase_Holl-junc_RuvB"/>
</dbReference>
<dbReference type="InterPro" id="IPR027417">
    <property type="entry name" value="P-loop_NTPase"/>
</dbReference>
<dbReference type="InterPro" id="IPR008824">
    <property type="entry name" value="RuvB-like_N"/>
</dbReference>
<dbReference type="InterPro" id="IPR008823">
    <property type="entry name" value="RuvB_C"/>
</dbReference>
<dbReference type="InterPro" id="IPR036388">
    <property type="entry name" value="WH-like_DNA-bd_sf"/>
</dbReference>
<dbReference type="InterPro" id="IPR036390">
    <property type="entry name" value="WH_DNA-bd_sf"/>
</dbReference>
<dbReference type="NCBIfam" id="NF000868">
    <property type="entry name" value="PRK00080.1"/>
    <property type="match status" value="1"/>
</dbReference>
<dbReference type="NCBIfam" id="TIGR00635">
    <property type="entry name" value="ruvB"/>
    <property type="match status" value="1"/>
</dbReference>
<dbReference type="PANTHER" id="PTHR42848">
    <property type="match status" value="1"/>
</dbReference>
<dbReference type="PANTHER" id="PTHR42848:SF1">
    <property type="entry name" value="HOLLIDAY JUNCTION BRANCH MIGRATION COMPLEX SUBUNIT RUVB"/>
    <property type="match status" value="1"/>
</dbReference>
<dbReference type="Pfam" id="PF17864">
    <property type="entry name" value="AAA_lid_4"/>
    <property type="match status" value="1"/>
</dbReference>
<dbReference type="Pfam" id="PF05491">
    <property type="entry name" value="RuvB_C"/>
    <property type="match status" value="1"/>
</dbReference>
<dbReference type="Pfam" id="PF05496">
    <property type="entry name" value="RuvB_N"/>
    <property type="match status" value="1"/>
</dbReference>
<dbReference type="SMART" id="SM00382">
    <property type="entry name" value="AAA"/>
    <property type="match status" value="1"/>
</dbReference>
<dbReference type="SUPFAM" id="SSF52540">
    <property type="entry name" value="P-loop containing nucleoside triphosphate hydrolases"/>
    <property type="match status" value="1"/>
</dbReference>
<dbReference type="SUPFAM" id="SSF46785">
    <property type="entry name" value="Winged helix' DNA-binding domain"/>
    <property type="match status" value="1"/>
</dbReference>
<feature type="chain" id="PRO_0000165580" description="Holliday junction branch migration complex subunit RuvB">
    <location>
        <begin position="1"/>
        <end position="353"/>
    </location>
</feature>
<feature type="region of interest" description="Large ATPase domain (RuvB-L)" evidence="1">
    <location>
        <begin position="4"/>
        <end position="185"/>
    </location>
</feature>
<feature type="region of interest" description="Small ATPAse domain (RuvB-S)" evidence="1">
    <location>
        <begin position="186"/>
        <end position="256"/>
    </location>
</feature>
<feature type="region of interest" description="Head domain (RuvB-H)" evidence="1">
    <location>
        <begin position="259"/>
        <end position="353"/>
    </location>
</feature>
<feature type="binding site" evidence="1">
    <location>
        <position position="24"/>
    </location>
    <ligand>
        <name>ATP</name>
        <dbReference type="ChEBI" id="CHEBI:30616"/>
    </ligand>
</feature>
<feature type="binding site" evidence="1">
    <location>
        <position position="25"/>
    </location>
    <ligand>
        <name>ATP</name>
        <dbReference type="ChEBI" id="CHEBI:30616"/>
    </ligand>
</feature>
<feature type="binding site" evidence="1">
    <location>
        <position position="66"/>
    </location>
    <ligand>
        <name>ATP</name>
        <dbReference type="ChEBI" id="CHEBI:30616"/>
    </ligand>
</feature>
<feature type="binding site" evidence="1">
    <location>
        <position position="69"/>
    </location>
    <ligand>
        <name>ATP</name>
        <dbReference type="ChEBI" id="CHEBI:30616"/>
    </ligand>
</feature>
<feature type="binding site" evidence="1">
    <location>
        <position position="70"/>
    </location>
    <ligand>
        <name>ATP</name>
        <dbReference type="ChEBI" id="CHEBI:30616"/>
    </ligand>
</feature>
<feature type="binding site" evidence="1">
    <location>
        <position position="70"/>
    </location>
    <ligand>
        <name>Mg(2+)</name>
        <dbReference type="ChEBI" id="CHEBI:18420"/>
    </ligand>
</feature>
<feature type="binding site" evidence="1">
    <location>
        <position position="71"/>
    </location>
    <ligand>
        <name>ATP</name>
        <dbReference type="ChEBI" id="CHEBI:30616"/>
    </ligand>
</feature>
<feature type="binding site" evidence="1">
    <location>
        <begin position="132"/>
        <end position="134"/>
    </location>
    <ligand>
        <name>ATP</name>
        <dbReference type="ChEBI" id="CHEBI:30616"/>
    </ligand>
</feature>
<feature type="binding site" evidence="1">
    <location>
        <position position="175"/>
    </location>
    <ligand>
        <name>ATP</name>
        <dbReference type="ChEBI" id="CHEBI:30616"/>
    </ligand>
</feature>
<feature type="binding site" evidence="1">
    <location>
        <position position="185"/>
    </location>
    <ligand>
        <name>ATP</name>
        <dbReference type="ChEBI" id="CHEBI:30616"/>
    </ligand>
</feature>
<feature type="binding site" evidence="1">
    <location>
        <position position="222"/>
    </location>
    <ligand>
        <name>ATP</name>
        <dbReference type="ChEBI" id="CHEBI:30616"/>
    </ligand>
</feature>
<feature type="binding site" evidence="1">
    <location>
        <position position="295"/>
    </location>
    <ligand>
        <name>DNA</name>
        <dbReference type="ChEBI" id="CHEBI:16991"/>
    </ligand>
</feature>
<feature type="binding site" evidence="1">
    <location>
        <position position="314"/>
    </location>
    <ligand>
        <name>DNA</name>
        <dbReference type="ChEBI" id="CHEBI:16991"/>
    </ligand>
</feature>
<feature type="binding site" evidence="1">
    <location>
        <position position="319"/>
    </location>
    <ligand>
        <name>DNA</name>
        <dbReference type="ChEBI" id="CHEBI:16991"/>
    </ligand>
</feature>
<reference key="1">
    <citation type="journal article" date="2003" name="Proc. Natl. Acad. Sci. U.S.A.">
        <title>The complete genome sequence of the Arabidopsis and tomato pathogen Pseudomonas syringae pv. tomato DC3000.</title>
        <authorList>
            <person name="Buell C.R."/>
            <person name="Joardar V."/>
            <person name="Lindeberg M."/>
            <person name="Selengut J."/>
            <person name="Paulsen I.T."/>
            <person name="Gwinn M.L."/>
            <person name="Dodson R.J."/>
            <person name="DeBoy R.T."/>
            <person name="Durkin A.S."/>
            <person name="Kolonay J.F."/>
            <person name="Madupu R."/>
            <person name="Daugherty S.C."/>
            <person name="Brinkac L.M."/>
            <person name="Beanan M.J."/>
            <person name="Haft D.H."/>
            <person name="Nelson W.C."/>
            <person name="Davidsen T.M."/>
            <person name="Zafar N."/>
            <person name="Zhou L."/>
            <person name="Liu J."/>
            <person name="Yuan Q."/>
            <person name="Khouri H.M."/>
            <person name="Fedorova N.B."/>
            <person name="Tran B."/>
            <person name="Russell D."/>
            <person name="Berry K.J."/>
            <person name="Utterback T.R."/>
            <person name="Van Aken S.E."/>
            <person name="Feldblyum T.V."/>
            <person name="D'Ascenzo M."/>
            <person name="Deng W.-L."/>
            <person name="Ramos A.R."/>
            <person name="Alfano J.R."/>
            <person name="Cartinhour S."/>
            <person name="Chatterjee A.K."/>
            <person name="Delaney T.P."/>
            <person name="Lazarowitz S.G."/>
            <person name="Martin G.B."/>
            <person name="Schneider D.J."/>
            <person name="Tang X."/>
            <person name="Bender C.L."/>
            <person name="White O."/>
            <person name="Fraser C.M."/>
            <person name="Collmer A."/>
        </authorList>
    </citation>
    <scope>NUCLEOTIDE SEQUENCE [LARGE SCALE GENOMIC DNA]</scope>
    <source>
        <strain>ATCC BAA-871 / DC3000</strain>
    </source>
</reference>
<protein>
    <recommendedName>
        <fullName evidence="1">Holliday junction branch migration complex subunit RuvB</fullName>
        <ecNumber evidence="1">3.6.4.-</ecNumber>
    </recommendedName>
</protein>
<proteinExistence type="inferred from homology"/>
<accession>Q87Y35</accession>
<organism>
    <name type="scientific">Pseudomonas syringae pv. tomato (strain ATCC BAA-871 / DC3000)</name>
    <dbReference type="NCBI Taxonomy" id="223283"/>
    <lineage>
        <taxon>Bacteria</taxon>
        <taxon>Pseudomonadati</taxon>
        <taxon>Pseudomonadota</taxon>
        <taxon>Gammaproteobacteria</taxon>
        <taxon>Pseudomonadales</taxon>
        <taxon>Pseudomonadaceae</taxon>
        <taxon>Pseudomonas</taxon>
    </lineage>
</organism>
<comment type="function">
    <text evidence="1">The RuvA-RuvB-RuvC complex processes Holliday junction (HJ) DNA during genetic recombination and DNA repair, while the RuvA-RuvB complex plays an important role in the rescue of blocked DNA replication forks via replication fork reversal (RFR). RuvA specifically binds to HJ cruciform DNA, conferring on it an open structure. The RuvB hexamer acts as an ATP-dependent pump, pulling dsDNA into and through the RuvAB complex. RuvB forms 2 homohexamers on either side of HJ DNA bound by 1 or 2 RuvA tetramers; 4 subunits per hexamer contact DNA at a time. Coordinated motions by a converter formed by DNA-disengaged RuvB subunits stimulates ATP hydrolysis and nucleotide exchange. Immobilization of the converter enables RuvB to convert the ATP-contained energy into a lever motion, pulling 2 nucleotides of DNA out of the RuvA tetramer per ATP hydrolyzed, thus driving DNA branch migration. The RuvB motors rotate together with the DNA substrate, which together with the progressing nucleotide cycle form the mechanistic basis for DNA recombination by continuous HJ branch migration. Branch migration allows RuvC to scan DNA until it finds its consensus sequence, where it cleaves and resolves cruciform DNA.</text>
</comment>
<comment type="catalytic activity">
    <reaction evidence="1">
        <text>ATP + H2O = ADP + phosphate + H(+)</text>
        <dbReference type="Rhea" id="RHEA:13065"/>
        <dbReference type="ChEBI" id="CHEBI:15377"/>
        <dbReference type="ChEBI" id="CHEBI:15378"/>
        <dbReference type="ChEBI" id="CHEBI:30616"/>
        <dbReference type="ChEBI" id="CHEBI:43474"/>
        <dbReference type="ChEBI" id="CHEBI:456216"/>
    </reaction>
</comment>
<comment type="subunit">
    <text evidence="1">Homohexamer. Forms an RuvA(8)-RuvB(12)-Holliday junction (HJ) complex. HJ DNA is sandwiched between 2 RuvA tetramers; dsDNA enters through RuvA and exits via RuvB. An RuvB hexamer assembles on each DNA strand where it exits the tetramer. Each RuvB hexamer is contacted by two RuvA subunits (via domain III) on 2 adjacent RuvB subunits; this complex drives branch migration. In the full resolvosome a probable DNA-RuvA(4)-RuvB(12)-RuvC(2) complex forms which resolves the HJ.</text>
</comment>
<comment type="subcellular location">
    <subcellularLocation>
        <location evidence="1">Cytoplasm</location>
    </subcellularLocation>
</comment>
<comment type="domain">
    <text evidence="1">Has 3 domains, the large (RuvB-L) and small ATPase (RuvB-S) domains and the C-terminal head (RuvB-H) domain. The head domain binds DNA, while the ATPase domains jointly bind ATP, ADP or are empty depending on the state of the subunit in the translocation cycle. During a single DNA translocation step the structure of each domain remains the same, but their relative positions change.</text>
</comment>
<comment type="similarity">
    <text evidence="1">Belongs to the RuvB family.</text>
</comment>
<comment type="sequence caution" evidence="2">
    <conflict type="erroneous initiation">
        <sequence resource="EMBL-CDS" id="AAO57436"/>
    </conflict>
</comment>